<organism>
    <name type="scientific">Mus musculus</name>
    <name type="common">Mouse</name>
    <dbReference type="NCBI Taxonomy" id="10090"/>
    <lineage>
        <taxon>Eukaryota</taxon>
        <taxon>Metazoa</taxon>
        <taxon>Chordata</taxon>
        <taxon>Craniata</taxon>
        <taxon>Vertebrata</taxon>
        <taxon>Euteleostomi</taxon>
        <taxon>Mammalia</taxon>
        <taxon>Eutheria</taxon>
        <taxon>Euarchontoglires</taxon>
        <taxon>Glires</taxon>
        <taxon>Rodentia</taxon>
        <taxon>Myomorpha</taxon>
        <taxon>Muroidea</taxon>
        <taxon>Muridae</taxon>
        <taxon>Murinae</taxon>
        <taxon>Mus</taxon>
        <taxon>Mus</taxon>
    </lineage>
</organism>
<gene>
    <name type="primary">Pold3</name>
</gene>
<keyword id="KW-0007">Acetylation</keyword>
<keyword id="KW-0963">Cytoplasm</keyword>
<keyword id="KW-0903">Direct protein sequencing</keyword>
<keyword id="KW-0227">DNA damage</keyword>
<keyword id="KW-0228">DNA excision</keyword>
<keyword id="KW-0234">DNA repair</keyword>
<keyword id="KW-0235">DNA replication</keyword>
<keyword id="KW-1017">Isopeptide bond</keyword>
<keyword id="KW-0539">Nucleus</keyword>
<keyword id="KW-0597">Phosphoprotein</keyword>
<keyword id="KW-1185">Reference proteome</keyword>
<keyword id="KW-0832">Ubl conjugation</keyword>
<accession>Q9EQ28</accession>
<reference key="1">
    <citation type="submission" date="2000-08" db="EMBL/GenBank/DDBJ databases">
        <title>Identification of testicular germ cell gene expression by differential display analysis.</title>
        <authorList>
            <person name="Anway M.D."/>
            <person name="Li Y."/>
            <person name="Griswold M.D."/>
        </authorList>
    </citation>
    <scope>NUCLEOTIDE SEQUENCE [MRNA]</scope>
    <source>
        <strain>BALB/cJ</strain>
        <tissue>Testis</tissue>
    </source>
</reference>
<reference key="2">
    <citation type="journal article" date="1999" name="Nucleic Acids Res.">
        <title>Isolation and identification of the third subunit of mammalian DNA polymerase delta by PCNA-affinity chromatography of mouse FM3A cell extracts.</title>
        <authorList>
            <person name="Hughes P."/>
            <person name="Tratner I."/>
            <person name="Ducoux M."/>
            <person name="Piard K."/>
            <person name="Baldacci G."/>
        </authorList>
    </citation>
    <scope>PARTIAL PROTEIN SEQUENCE</scope>
    <scope>FUNCTION</scope>
</reference>
<reference key="3">
    <citation type="journal article" date="2010" name="Cell">
        <title>A tissue-specific atlas of mouse protein phosphorylation and expression.</title>
        <authorList>
            <person name="Huttlin E.L."/>
            <person name="Jedrychowski M.P."/>
            <person name="Elias J.E."/>
            <person name="Goswami T."/>
            <person name="Rad R."/>
            <person name="Beausoleil S.A."/>
            <person name="Villen J."/>
            <person name="Haas W."/>
            <person name="Sowa M.E."/>
            <person name="Gygi S.P."/>
        </authorList>
    </citation>
    <scope>PHOSPHORYLATION [LARGE SCALE ANALYSIS] AT SER-306</scope>
    <scope>IDENTIFICATION BY MASS SPECTROMETRY [LARGE SCALE ANALYSIS]</scope>
    <source>
        <tissue>Spleen</tissue>
    </source>
</reference>
<reference key="4">
    <citation type="journal article" date="2016" name="Mol. Cell">
        <title>POLD3 Is Haploinsufficient for DNA Replication in Mice.</title>
        <authorList>
            <person name="Murga M."/>
            <person name="Lecona E."/>
            <person name="Kamileri I."/>
            <person name="Diaz M."/>
            <person name="Lugli N."/>
            <person name="Sotiriou S.K."/>
            <person name="Anton M.E."/>
            <person name="Mendez J."/>
            <person name="Halazonetis T.D."/>
            <person name="Fernandez-Capetillo O."/>
        </authorList>
    </citation>
    <scope>FUNCTION IN POL-DELTA COMPLEX STABILIZATION</scope>
    <scope>DISRUPTION PHENOTYPE</scope>
    <scope>SUBCELLULAR LOCATION</scope>
    <scope>INTERACTION WITH POLD1; POLD2 AND POLD4</scope>
</reference>
<feature type="initiator methionine" description="Removed" evidence="1">
    <location>
        <position position="1"/>
    </location>
</feature>
<feature type="chain" id="PRO_0000186048" description="DNA polymerase delta subunit 3">
    <location>
        <begin position="2"/>
        <end position="462"/>
    </location>
</feature>
<feature type="region of interest" description="Disordered" evidence="2">
    <location>
        <begin position="144"/>
        <end position="186"/>
    </location>
</feature>
<feature type="region of interest" description="Disordered" evidence="2">
    <location>
        <begin position="200"/>
        <end position="230"/>
    </location>
</feature>
<feature type="region of interest" description="Disordered" evidence="2">
    <location>
        <begin position="254"/>
        <end position="384"/>
    </location>
</feature>
<feature type="region of interest" description="Disordered" evidence="2">
    <location>
        <begin position="403"/>
        <end position="462"/>
    </location>
</feature>
<feature type="short sequence motif" description="PIP-box" evidence="1">
    <location>
        <begin position="452"/>
        <end position="459"/>
    </location>
</feature>
<feature type="compositionally biased region" description="Polar residues" evidence="2">
    <location>
        <begin position="156"/>
        <end position="174"/>
    </location>
</feature>
<feature type="compositionally biased region" description="Basic and acidic residues" evidence="2">
    <location>
        <begin position="204"/>
        <end position="215"/>
    </location>
</feature>
<feature type="compositionally biased region" description="Low complexity" evidence="2">
    <location>
        <begin position="218"/>
        <end position="230"/>
    </location>
</feature>
<feature type="compositionally biased region" description="Basic and acidic residues" evidence="2">
    <location>
        <begin position="284"/>
        <end position="305"/>
    </location>
</feature>
<feature type="compositionally biased region" description="Acidic residues" evidence="2">
    <location>
        <begin position="330"/>
        <end position="344"/>
    </location>
</feature>
<feature type="compositionally biased region" description="Pro residues" evidence="2">
    <location>
        <begin position="348"/>
        <end position="368"/>
    </location>
</feature>
<feature type="compositionally biased region" description="Low complexity" evidence="2">
    <location>
        <begin position="416"/>
        <end position="427"/>
    </location>
</feature>
<feature type="compositionally biased region" description="Basic and acidic residues" evidence="2">
    <location>
        <begin position="428"/>
        <end position="437"/>
    </location>
</feature>
<feature type="compositionally biased region" description="Polar residues" evidence="2">
    <location>
        <begin position="451"/>
        <end position="462"/>
    </location>
</feature>
<feature type="modified residue" description="N-acetylalanine" evidence="1">
    <location>
        <position position="2"/>
    </location>
</feature>
<feature type="modified residue" description="Phosphoserine" evidence="6">
    <location>
        <position position="306"/>
    </location>
</feature>
<feature type="modified residue" description="Phosphoserine" evidence="1">
    <location>
        <position position="403"/>
    </location>
</feature>
<feature type="modified residue" description="Phosphoserine" evidence="1">
    <location>
        <position position="405"/>
    </location>
</feature>
<feature type="modified residue" description="Phosphothreonine" evidence="1">
    <location>
        <position position="407"/>
    </location>
</feature>
<feature type="modified residue" description="Phosphoserine" evidence="1">
    <location>
        <position position="409"/>
    </location>
</feature>
<feature type="modified residue" description="Phosphoserine" evidence="1">
    <location>
        <position position="454"/>
    </location>
</feature>
<feature type="cross-link" description="Glycyl lysine isopeptide (Lys-Gly) (interchain with G-Cter in SUMO); alternate" evidence="1">
    <location>
        <position position="256"/>
    </location>
</feature>
<feature type="cross-link" description="Glycyl lysine isopeptide (Lys-Gly) (interchain with G-Cter in SUMO2); alternate" evidence="1">
    <location>
        <position position="256"/>
    </location>
</feature>
<feature type="cross-link" description="Glycyl lysine isopeptide (Lys-Gly) (interchain with G-Cter in SUMO2)" evidence="1">
    <location>
        <position position="259"/>
    </location>
</feature>
<feature type="cross-link" description="Glycyl lysine isopeptide (Lys-Gly) (interchain with G-Cter in SUMO); alternate" evidence="1">
    <location>
        <position position="429"/>
    </location>
</feature>
<feature type="cross-link" description="Glycyl lysine isopeptide (Lys-Gly) (interchain with G-Cter in SUMO2); alternate" evidence="1">
    <location>
        <position position="429"/>
    </location>
</feature>
<sequence>MAEQLYLENIDEFVTDQNKIVTYKWLSYTLGVHVNQAKQMLYEYVERKRKENSGAQLHVTYLVSGSLIQNGHSCHKVAVVREDKLEAVKSKLAVTASIHVYSIQKAMLKDSGPLFNTDYDILKSNLQNCSKFSAIQCAAAVPRAPAESPSSRKYEQSNLQAASEAQASELTTNGHGPPASKQASQQPKGIMGMLISKAATKTQDTNKETKPEAREVTSASSAGGKAPGKGSVMSNFFGKAAMNKLKVNLDSEQAVKEEKTVEQPPVSVTEPKLAAPPAQKKSSRKSEPGKVQQKEKSSRGKRVDLSDEEAKETEHLKKKRRRIKLPQSDSSEDEVFEDSPEMYEADSPSPPPVSPPPDPMPKTEPPPVKRSSGETKRRRKRVLKSKTFVDEEGCIVTEKVYESESCTDSEEELKMKPASAHKPPAAAVKREPREERKGPKKGAAALGKANRQVSITGFFQKK</sequence>
<name>DPOD3_MOUSE</name>
<protein>
    <recommendedName>
        <fullName>DNA polymerase delta subunit 3</fullName>
    </recommendedName>
    <alternativeName>
        <fullName>DNA polymerase delta subunit p66</fullName>
    </alternativeName>
</protein>
<proteinExistence type="evidence at protein level"/>
<evidence type="ECO:0000250" key="1">
    <source>
        <dbReference type="UniProtKB" id="Q15054"/>
    </source>
</evidence>
<evidence type="ECO:0000256" key="2">
    <source>
        <dbReference type="SAM" id="MobiDB-lite"/>
    </source>
</evidence>
<evidence type="ECO:0000269" key="3">
    <source>
    </source>
</evidence>
<evidence type="ECO:0000269" key="4">
    <source>
    </source>
</evidence>
<evidence type="ECO:0000305" key="5"/>
<evidence type="ECO:0007744" key="6">
    <source>
    </source>
</evidence>
<dbReference type="EMBL" id="AF294329">
    <property type="protein sequence ID" value="AAG45967.1"/>
    <property type="status" value="ALT_INIT"/>
    <property type="molecule type" value="mRNA"/>
</dbReference>
<dbReference type="RefSeq" id="NP_001355309.1">
    <property type="nucleotide sequence ID" value="NM_001368380.1"/>
</dbReference>
<dbReference type="RefSeq" id="XP_006508212.2">
    <property type="nucleotide sequence ID" value="XM_006508149.2"/>
</dbReference>
<dbReference type="SMR" id="Q9EQ28"/>
<dbReference type="ComplexPortal" id="CPX-2098">
    <property type="entry name" value="DNA polymerase delta complex"/>
</dbReference>
<dbReference type="CORUM" id="Q9EQ28"/>
<dbReference type="FunCoup" id="Q9EQ28">
    <property type="interactions" value="1348"/>
</dbReference>
<dbReference type="IntAct" id="Q9EQ28">
    <property type="interactions" value="1"/>
</dbReference>
<dbReference type="STRING" id="10090.ENSMUSP00000032969"/>
<dbReference type="ChEMBL" id="CHEMBL4879511"/>
<dbReference type="iPTMnet" id="Q9EQ28"/>
<dbReference type="PhosphoSitePlus" id="Q9EQ28"/>
<dbReference type="jPOST" id="Q9EQ28"/>
<dbReference type="PaxDb" id="10090-ENSMUSP00000032969"/>
<dbReference type="ProteomicsDB" id="279478"/>
<dbReference type="Pumba" id="Q9EQ28"/>
<dbReference type="GeneID" id="67967"/>
<dbReference type="UCSC" id="uc009imk.1">
    <property type="organism name" value="mouse"/>
</dbReference>
<dbReference type="AGR" id="MGI:1915217"/>
<dbReference type="MGI" id="MGI:1915217">
    <property type="gene designation" value="Pold3"/>
</dbReference>
<dbReference type="eggNOG" id="ENOG502QPSW">
    <property type="taxonomic scope" value="Eukaryota"/>
</dbReference>
<dbReference type="InParanoid" id="Q9EQ28"/>
<dbReference type="PhylomeDB" id="Q9EQ28"/>
<dbReference type="Reactome" id="R-MMU-110314">
    <property type="pathway name" value="Recognition of DNA damage by PCNA-containing replication complex"/>
</dbReference>
<dbReference type="Reactome" id="R-MMU-174411">
    <property type="pathway name" value="Polymerase switching on the C-strand of the telomere"/>
</dbReference>
<dbReference type="Reactome" id="R-MMU-174414">
    <property type="pathway name" value="Processive synthesis on the C-strand of the telomere"/>
</dbReference>
<dbReference type="Reactome" id="R-MMU-174417">
    <property type="pathway name" value="Telomere C-strand (Lagging Strand) Synthesis"/>
</dbReference>
<dbReference type="Reactome" id="R-MMU-174437">
    <property type="pathway name" value="Removal of the Flap Intermediate from the C-strand"/>
</dbReference>
<dbReference type="Reactome" id="R-MMU-5358565">
    <property type="pathway name" value="Mismatch repair (MMR) directed by MSH2:MSH6 (MutSalpha)"/>
</dbReference>
<dbReference type="Reactome" id="R-MMU-5358606">
    <property type="pathway name" value="Mismatch repair (MMR) directed by MSH2:MSH3 (MutSbeta)"/>
</dbReference>
<dbReference type="Reactome" id="R-MMU-5651801">
    <property type="pathway name" value="PCNA-Dependent Long Patch Base Excision Repair"/>
</dbReference>
<dbReference type="Reactome" id="R-MMU-5656169">
    <property type="pathway name" value="Termination of translesion DNA synthesis"/>
</dbReference>
<dbReference type="Reactome" id="R-MMU-5685942">
    <property type="pathway name" value="HDR through Homologous Recombination (HRR)"/>
</dbReference>
<dbReference type="Reactome" id="R-MMU-5696397">
    <property type="pathway name" value="Gap-filling DNA repair synthesis and ligation in GG-NER"/>
</dbReference>
<dbReference type="Reactome" id="R-MMU-5696400">
    <property type="pathway name" value="Dual Incision in GG-NER"/>
</dbReference>
<dbReference type="Reactome" id="R-MMU-6782135">
    <property type="pathway name" value="Dual incision in TC-NER"/>
</dbReference>
<dbReference type="Reactome" id="R-MMU-6782210">
    <property type="pathway name" value="Gap-filling DNA repair synthesis and ligation in TC-NER"/>
</dbReference>
<dbReference type="Reactome" id="R-MMU-69091">
    <property type="pathway name" value="Polymerase switching"/>
</dbReference>
<dbReference type="Reactome" id="R-MMU-69166">
    <property type="pathway name" value="Removal of the Flap Intermediate"/>
</dbReference>
<dbReference type="Reactome" id="R-MMU-69183">
    <property type="pathway name" value="Processive synthesis on the lagging strand"/>
</dbReference>
<dbReference type="BioGRID-ORCS" id="67967">
    <property type="hits" value="29 hits in 111 CRISPR screens"/>
</dbReference>
<dbReference type="ChiTaRS" id="Pold3">
    <property type="organism name" value="mouse"/>
</dbReference>
<dbReference type="PRO" id="PR:Q9EQ28"/>
<dbReference type="Proteomes" id="UP000000589">
    <property type="component" value="Unplaced"/>
</dbReference>
<dbReference type="RNAct" id="Q9EQ28">
    <property type="molecule type" value="protein"/>
</dbReference>
<dbReference type="GO" id="GO:0005737">
    <property type="term" value="C:cytoplasm"/>
    <property type="evidence" value="ECO:0007669"/>
    <property type="project" value="UniProtKB-SubCell"/>
</dbReference>
<dbReference type="GO" id="GO:0043625">
    <property type="term" value="C:delta DNA polymerase complex"/>
    <property type="evidence" value="ECO:0000314"/>
    <property type="project" value="UniProtKB"/>
</dbReference>
<dbReference type="GO" id="GO:0071897">
    <property type="term" value="P:DNA biosynthetic process"/>
    <property type="evidence" value="ECO:0000314"/>
    <property type="project" value="UniProtKB"/>
</dbReference>
<dbReference type="GO" id="GO:0006281">
    <property type="term" value="P:DNA repair"/>
    <property type="evidence" value="ECO:0007669"/>
    <property type="project" value="UniProtKB-KW"/>
</dbReference>
<dbReference type="GO" id="GO:0006261">
    <property type="term" value="P:DNA-templated DNA replication"/>
    <property type="evidence" value="ECO:0000266"/>
    <property type="project" value="ComplexPortal"/>
</dbReference>
<dbReference type="FunFam" id="3.90.1030.20:FF:000001">
    <property type="entry name" value="DNA polymerase delta 3, accessory subunit"/>
    <property type="match status" value="1"/>
</dbReference>
<dbReference type="Gene3D" id="3.90.1030.20">
    <property type="entry name" value="DNA polymerase delta, p66 (Cdc27) subunit, wHTH domain"/>
    <property type="match status" value="1"/>
</dbReference>
<dbReference type="InterPro" id="IPR019038">
    <property type="entry name" value="POLD3"/>
</dbReference>
<dbReference type="InterPro" id="IPR041913">
    <property type="entry name" value="POLD3_sf"/>
</dbReference>
<dbReference type="PANTHER" id="PTHR17598">
    <property type="entry name" value="DNA POLYMERASE DELTA SUBUNIT 3"/>
    <property type="match status" value="1"/>
</dbReference>
<dbReference type="PANTHER" id="PTHR17598:SF13">
    <property type="entry name" value="DNA POLYMERASE DELTA SUBUNIT 3"/>
    <property type="match status" value="1"/>
</dbReference>
<dbReference type="Pfam" id="PF09507">
    <property type="entry name" value="CDC27"/>
    <property type="match status" value="1"/>
</dbReference>
<comment type="function">
    <text evidence="1 3 4">Accessory component of both the DNA polymerase delta complex and the DNA polymerase zeta complex (By similarity). As a component of the trimeric and tetrameric DNA polymerase delta complexes (Pol-delta3 and Pol-delta4, respectively), plays a role in high fidelity genome replication, including in lagging strand synthesis, and repair (PubMed:10219083, PubMed:27524497). Required for optimal Pol-delta activity. Stabilizes the Pol-delta complex and plays a major role in Pol-delta stimulation by PCNA. Pol-delta3 and Pol-delta4 are characterized by the absence or the presence of POLD4. They exhibit differences in catalytic activity. Most notably, Pol-delta3 shows higher proofreading activity than Pol-delta4. Although both Pol-delta3 and Pol-delta4 process Okazaki fragments in vitro, Pol-delta3 may also be better suited to fulfill this task, exhibiting near-absence of strand displacement activity compared to Pol-delta4 and stalling on encounter with the 5'-blocking oligonucleotides. Pol-delta3 idling process may avoid the formation of a gap, while maintaining a nick that can be readily ligated. Along with DNA polymerase kappa, DNA polymerase delta carries out approximately half of nucleotide excision repair (NER) synthesis following UV irradiation. In this context, POLD3, along with PCNA and RFC1-replication factor C complex, is required to recruit POLD1, the catalytic subunit of the polymerase delta complex, to DNA damage sites. Under conditions of DNA replication stress, required for the repair of broken replication forks through break-induced replication (BIR). Involved in the translesion synthesis (TLS) of templates carrying O6-methylguanine or abasic sites performed by Pol-delta4, independently of DNA polymerase zeta (REV3L) or eta (POLH). Facilitates abasic site bypass by DNA polymerase delta by promoting extension from the nucleotide inserted opposite the lesion. Also involved in TLS, as a component of the tetrameric DNA polymerase zeta complex. Along with POLD2, dramatically increases the efficiency and processivity of DNA synthesis of the DNA polymerase zeta complex compared to the minimal zeta complex, consisting of only REV3L and REV7 (By similarity).</text>
</comment>
<comment type="subunit">
    <text evidence="1 4">Component of both the DNA polymerase delta and DNA polymerase zeta complexes (By similarity). The tetrameric DNA polymerase delta complex (Pol-delta4), which consists of POLD1/p125, POLD2/p50, POLD3/p66/p68 and POLD4/p12, with POLD1 bearing DNA polymerase and 3' to 5' proofreading exonuclease activities (PubMed:27524497). Within this complex, directly interacts with POLD2. Following stress caused by DNA damaging agents or by replication stress, POLD4 is degraded and Pol-delta4 is converted into a trimeric form of the complex (Pol-delta3), which consists of POLD1, POLD2 and POLD3. Pol-delta3 is the major form occurring at S phase replication sites, as well as DNA damage sites. Directly interacts with PCNA, as do POLD1 and POLD4; this interaction stimulates Pol-delta polymerase activity. POLD3 phosphorylation at Ser-454 impairs PCNA binding. Component of the DNA polymerase zeta complex (POLZ), which consists of REV3L, MAD2L2, POLD2 and POLD3, with REV3L bearing DNA polymerase catalytic activity. The DNA polymerase delta complex interacts with POLDIP2; this interaction is probably mediated through direct binding to POLD2 (By similarity).</text>
</comment>
<comment type="subcellular location">
    <subcellularLocation>
        <location evidence="4">Cytoplasm</location>
    </subcellularLocation>
    <subcellularLocation>
        <location evidence="4">Nucleus</location>
    </subcellularLocation>
    <text evidence="1">Partially colocalizes with PCNA and POLD1 at S phase replication sites. Recruited to DNA damage sites within 2 hours following UV irradiation.</text>
</comment>
<comment type="domain">
    <text evidence="1">The PIP-box mediates the interaction with PCNA.</text>
</comment>
<comment type="PTM">
    <text evidence="1">Ubiquitinated, but not targeted to the proteasome. Sumoylated. Sumoylation by SUMO3 may be predominant.</text>
</comment>
<comment type="PTM">
    <text evidence="1">Phosphorylation at Ser-454 is thought to decrease the affinity for PCNA and Pol-delta4 processivity. May be phosphorylated by CDK1-cyclin-A complex, as well as CDK2-cyclin-A and CDK2-cyclin-E complexes. PCNA interferes with CDK-cyclin phosphorylation.</text>
</comment>
<comment type="disruption phenotype">
    <text evidence="4">In a conditional knockdown, embryonic lethal when homozygous. Induction of the knockdown in adult animals results in a generalized accumulation of DNA damage and ultimately death of all mice within 15 weeks after the beginning of the treatment. Heterozygous animals are born at sub-Mendelian ratios, and, of those born, some are dwarfs, present hydrocephaly and have a reduced lifespan. In cells, Pold3 deficiency leads to replication stress and cell death.</text>
</comment>
<comment type="sequence caution" evidence="5">
    <conflict type="erroneous initiation">
        <sequence resource="EMBL-CDS" id="AAG45967"/>
    </conflict>
    <text>Extended N-terminus.</text>
</comment>